<name>GO_ALSSC</name>
<comment type="function">
    <text evidence="3">A cytochrome P450 monooxygenase involved in the biosynthesis of strychnos monoterpene indole alkaloids (MIAs) natural products, compounds with effects on glucose absorption (PubMed:36349266). Catalyzes the conversion of geissoschizine to akuammicine (PubMed:36349266).</text>
</comment>
<comment type="catalytic activity">
    <reaction evidence="3">
        <text>(19E)-geissoschizine + reduced [NADPH--hemoprotein reductase] + O2 = akuammicine + formate + oxidized [NADPH--hemoprotein reductase] + H2O + H(+)</text>
        <dbReference type="Rhea" id="RHEA:58520"/>
        <dbReference type="Rhea" id="RHEA-COMP:11964"/>
        <dbReference type="Rhea" id="RHEA-COMP:11965"/>
        <dbReference type="ChEBI" id="CHEBI:15377"/>
        <dbReference type="ChEBI" id="CHEBI:15378"/>
        <dbReference type="ChEBI" id="CHEBI:15379"/>
        <dbReference type="ChEBI" id="CHEBI:15740"/>
        <dbReference type="ChEBI" id="CHEBI:17037"/>
        <dbReference type="ChEBI" id="CHEBI:57618"/>
        <dbReference type="ChEBI" id="CHEBI:58210"/>
        <dbReference type="ChEBI" id="CHEBI:142754"/>
        <dbReference type="EC" id="1.14.19.80"/>
    </reaction>
    <physiologicalReaction direction="left-to-right" evidence="3">
        <dbReference type="Rhea" id="RHEA:58521"/>
    </physiologicalReaction>
</comment>
<comment type="cofactor">
    <cofactor evidence="1">
        <name>heme</name>
        <dbReference type="ChEBI" id="CHEBI:30413"/>
    </cofactor>
</comment>
<comment type="biophysicochemical properties">
    <kinetics>
        <KM evidence="3">11.9 uM for geissoschizine</KM>
    </kinetics>
    <phDependence>
        <text evidence="3">Optimum pH is 6-7.</text>
    </phDependence>
    <temperatureDependence>
        <text evidence="3">Optimum temperature is 42 degrees Celsius.</text>
    </temperatureDependence>
</comment>
<comment type="pathway">
    <text evidence="3">Alkaloid biosynthesis.</text>
</comment>
<comment type="subcellular location">
    <subcellularLocation>
        <location evidence="2">Membrane</location>
        <topology evidence="2">Single-pass membrane protein</topology>
    </subcellularLocation>
</comment>
<comment type="similarity">
    <text evidence="5">Belongs to the cytochrome P450 family.</text>
</comment>
<dbReference type="EC" id="1.14.19.80" evidence="3"/>
<dbReference type="EMBL" id="OM323328">
    <property type="protein sequence ID" value="URS65383.1"/>
    <property type="molecule type" value="mRNA"/>
</dbReference>
<dbReference type="GO" id="GO:0016020">
    <property type="term" value="C:membrane"/>
    <property type="evidence" value="ECO:0007669"/>
    <property type="project" value="UniProtKB-KW"/>
</dbReference>
<dbReference type="GO" id="GO:0020037">
    <property type="term" value="F:heme binding"/>
    <property type="evidence" value="ECO:0007669"/>
    <property type="project" value="InterPro"/>
</dbReference>
<dbReference type="GO" id="GO:0005506">
    <property type="term" value="F:iron ion binding"/>
    <property type="evidence" value="ECO:0007669"/>
    <property type="project" value="InterPro"/>
</dbReference>
<dbReference type="GO" id="GO:0004497">
    <property type="term" value="F:monooxygenase activity"/>
    <property type="evidence" value="ECO:0000314"/>
    <property type="project" value="UniProtKB"/>
</dbReference>
<dbReference type="GO" id="GO:0016705">
    <property type="term" value="F:oxidoreductase activity, acting on paired donors, with incorporation or reduction of molecular oxygen"/>
    <property type="evidence" value="ECO:0007669"/>
    <property type="project" value="InterPro"/>
</dbReference>
<dbReference type="GO" id="GO:0035835">
    <property type="term" value="P:indole alkaloid biosynthetic process"/>
    <property type="evidence" value="ECO:0000314"/>
    <property type="project" value="UniProtKB"/>
</dbReference>
<dbReference type="CDD" id="cd11072">
    <property type="entry name" value="CYP71-like"/>
    <property type="match status" value="1"/>
</dbReference>
<dbReference type="FunFam" id="1.10.630.10:FF:000043">
    <property type="entry name" value="Cytochrome P450 99A2"/>
    <property type="match status" value="1"/>
</dbReference>
<dbReference type="Gene3D" id="1.10.630.10">
    <property type="entry name" value="Cytochrome P450"/>
    <property type="match status" value="1"/>
</dbReference>
<dbReference type="InterPro" id="IPR001128">
    <property type="entry name" value="Cyt_P450"/>
</dbReference>
<dbReference type="InterPro" id="IPR017972">
    <property type="entry name" value="Cyt_P450_CS"/>
</dbReference>
<dbReference type="InterPro" id="IPR002401">
    <property type="entry name" value="Cyt_P450_E_grp-I"/>
</dbReference>
<dbReference type="InterPro" id="IPR036396">
    <property type="entry name" value="Cyt_P450_sf"/>
</dbReference>
<dbReference type="PANTHER" id="PTHR47955:SF8">
    <property type="entry name" value="CYTOCHROME P450 71D11-LIKE"/>
    <property type="match status" value="1"/>
</dbReference>
<dbReference type="PANTHER" id="PTHR47955">
    <property type="entry name" value="CYTOCHROME P450 FAMILY 71 PROTEIN"/>
    <property type="match status" value="1"/>
</dbReference>
<dbReference type="Pfam" id="PF00067">
    <property type="entry name" value="p450"/>
    <property type="match status" value="1"/>
</dbReference>
<dbReference type="PRINTS" id="PR00463">
    <property type="entry name" value="EP450I"/>
</dbReference>
<dbReference type="SUPFAM" id="SSF48264">
    <property type="entry name" value="Cytochrome P450"/>
    <property type="match status" value="1"/>
</dbReference>
<dbReference type="PROSITE" id="PS00086">
    <property type="entry name" value="CYTOCHROME_P450"/>
    <property type="match status" value="1"/>
</dbReference>
<evidence type="ECO:0000250" key="1">
    <source>
        <dbReference type="UniProtKB" id="P04798"/>
    </source>
</evidence>
<evidence type="ECO:0000255" key="2"/>
<evidence type="ECO:0000269" key="3">
    <source>
    </source>
</evidence>
<evidence type="ECO:0000303" key="4">
    <source>
    </source>
</evidence>
<evidence type="ECO:0000305" key="5"/>
<evidence type="ECO:0000312" key="6">
    <source>
        <dbReference type="EMBL" id="URS65383.1"/>
    </source>
</evidence>
<protein>
    <recommendedName>
        <fullName evidence="4">Geissoschizine oxidase</fullName>
        <shortName evidence="4">AsGO</shortName>
        <ecNumber evidence="3">1.14.19.80</ecNumber>
    </recommendedName>
    <alternativeName>
        <fullName evidence="4">Cytochrome P450 GO</fullName>
    </alternativeName>
</protein>
<gene>
    <name evidence="4" type="primary">GO</name>
</gene>
<accession>A0A9E7S4M4</accession>
<organism>
    <name type="scientific">Alstonia scholaris</name>
    <name type="common">Dogbane</name>
    <name type="synonym">Echites scholaris</name>
    <dbReference type="NCBI Taxonomy" id="52822"/>
    <lineage>
        <taxon>Eukaryota</taxon>
        <taxon>Viridiplantae</taxon>
        <taxon>Streptophyta</taxon>
        <taxon>Embryophyta</taxon>
        <taxon>Tracheophyta</taxon>
        <taxon>Spermatophyta</taxon>
        <taxon>Magnoliopsida</taxon>
        <taxon>eudicotyledons</taxon>
        <taxon>Gunneridae</taxon>
        <taxon>Pentapetalae</taxon>
        <taxon>asterids</taxon>
        <taxon>lamiids</taxon>
        <taxon>Gentianales</taxon>
        <taxon>Apocynaceae</taxon>
        <taxon>Rauvolfioideae</taxon>
        <taxon>Alstonieae</taxon>
        <taxon>Alstonia</taxon>
    </lineage>
</organism>
<keyword id="KW-0017">Alkaloid metabolism</keyword>
<keyword id="KW-0349">Heme</keyword>
<keyword id="KW-0408">Iron</keyword>
<keyword id="KW-0472">Membrane</keyword>
<keyword id="KW-0479">Metal-binding</keyword>
<keyword id="KW-0503">Monooxygenase</keyword>
<keyword id="KW-0560">Oxidoreductase</keyword>
<keyword id="KW-0812">Transmembrane</keyword>
<keyword id="KW-1133">Transmembrane helix</keyword>
<feature type="chain" id="PRO_0000462244" description="Geissoschizine oxidase">
    <location>
        <begin position="1"/>
        <end position="501"/>
    </location>
</feature>
<feature type="transmembrane region" description="Helical" evidence="2">
    <location>
        <begin position="1"/>
        <end position="21"/>
    </location>
</feature>
<feature type="binding site" description="axial binding residue" evidence="1">
    <location>
        <position position="442"/>
    </location>
    <ligand>
        <name>heme</name>
        <dbReference type="ChEBI" id="CHEBI:30413"/>
    </ligand>
    <ligandPart>
        <name>Fe</name>
        <dbReference type="ChEBI" id="CHEBI:18248"/>
    </ligandPart>
</feature>
<feature type="mutagenesis site" description="Reduced activity." evidence="3">
    <original>I</original>
    <variation>V</variation>
    <location>
        <position position="109"/>
    </location>
</feature>
<feature type="mutagenesis site" description="Reduced activity." evidence="3">
    <original>V</original>
    <variation>C</variation>
    <location>
        <position position="202"/>
    </location>
</feature>
<feature type="mutagenesis site" description="Slightly increased activity." evidence="3">
    <original>T</original>
    <variation>V</variation>
    <location>
        <position position="205"/>
    </location>
</feature>
<feature type="mutagenesis site" description="Reduced activity." evidence="3">
    <original>S</original>
    <variation>A</variation>
    <location>
        <position position="209"/>
    </location>
</feature>
<feature type="mutagenesis site" description="Strongly reduced activity." evidence="3">
    <original>V</original>
    <variation>A</variation>
    <variation>Q</variation>
    <variation>E</variation>
    <location>
        <position position="372"/>
    </location>
</feature>
<feature type="mutagenesis site" description="Reduced activity but acquired ability to convert geissoschizine to rhazimal, with a low efficiency." evidence="3">
    <original>V</original>
    <variation>F</variation>
    <variation>I</variation>
    <variation>L</variation>
    <location>
        <position position="372"/>
    </location>
</feature>
<proteinExistence type="evidence at protein level"/>
<sequence>MEFSFSSPLLYILYFLLFFIVRQLLKPKSNRKLPPGPRTLPIIGNLHQLRGSLPHRTLKKLSDKHGPLMHLKMGERSAIIVSDARMAKIVLHNHGLAVADRSVNTVASIMTYNSLGVTFAQYGDYLTKLRQIYTLELLSPKKVRSFYNCFEDELDVFVKSIRSQVGQPMVLYEKVSTYLYATICRTIFGSVCKEREKMIKIVKRTSLLSGTPLRMEDLFPSMRVFCRFSKTLNQLRGLLQEMDGILEDIIVEREKTTEILKEAKDDEDMLSVLLRHKWYNPSGARFRITNADIKAIIFELILAATLSVADVVEWAMVEILRHPAILKKVYDEGRGICKEKKRVTGYDVEKMEYMRLCVKESTRVHPAAPLLVPRECREDFEVDGYTVPKGAWVLTNCWAIQMDPEIWPEPEKFDPERYIRNPMDFYGSNFELIPFGTGRRGCPGILYGVTNAELLLAAMFYHFDWEIADGKKPEDIDLTENFGAGCIMKYPLTLVPHLANE</sequence>
<reference evidence="6" key="1">
    <citation type="journal article" date="2022" name="Chem. Sci.">
        <title>Deciphering and reprogramming the cyclization regioselectivity in bifurcation of indole alkaloid biosynthesis.</title>
        <authorList>
            <person name="Wang Z."/>
            <person name="Xiao Y."/>
            <person name="Wu S."/>
            <person name="Chen J."/>
            <person name="Li A."/>
            <person name="Tatsis E.C."/>
        </authorList>
    </citation>
    <scope>NUCLEOTIDE SEQUENCE [MRNA]</scope>
    <scope>FUNCTION</scope>
    <scope>MUTAGENESIS OF ILE-109; VAL-202; THR-205; SER-209 AND VAL-372</scope>
    <scope>CATALYTIC ACTIVITY</scope>
    <scope>PATHWAY</scope>
    <scope>BIOPHYSICOCHEMICAL PROPERTIES</scope>
</reference>